<name>PDXK_ECOLU</name>
<keyword id="KW-0067">ATP-binding</keyword>
<keyword id="KW-0418">Kinase</keyword>
<keyword id="KW-0460">Magnesium</keyword>
<keyword id="KW-0479">Metal-binding</keyword>
<keyword id="KW-0547">Nucleotide-binding</keyword>
<keyword id="KW-0808">Transferase</keyword>
<keyword id="KW-0862">Zinc</keyword>
<feature type="chain" id="PRO_1000186806" description="Pyridoxine/pyridoxal/pyridoxamine kinase">
    <location>
        <begin position="1"/>
        <end position="283"/>
    </location>
</feature>
<feature type="binding site" evidence="1">
    <location>
        <position position="23"/>
    </location>
    <ligand>
        <name>substrate</name>
    </ligand>
</feature>
<feature type="binding site" evidence="1">
    <location>
        <position position="59"/>
    </location>
    <ligand>
        <name>substrate</name>
    </ligand>
</feature>
<feature type="binding site" evidence="1">
    <location>
        <position position="125"/>
    </location>
    <ligand>
        <name>ATP</name>
        <dbReference type="ChEBI" id="CHEBI:30616"/>
    </ligand>
</feature>
<feature type="binding site" evidence="1">
    <location>
        <position position="136"/>
    </location>
    <ligand>
        <name>Mg(2+)</name>
        <dbReference type="ChEBI" id="CHEBI:18420"/>
    </ligand>
</feature>
<feature type="binding site" evidence="1">
    <location>
        <position position="157"/>
    </location>
    <ligand>
        <name>ATP</name>
        <dbReference type="ChEBI" id="CHEBI:30616"/>
    </ligand>
</feature>
<feature type="binding site" evidence="1">
    <location>
        <position position="162"/>
    </location>
    <ligand>
        <name>ATP</name>
        <dbReference type="ChEBI" id="CHEBI:30616"/>
    </ligand>
</feature>
<feature type="binding site" evidence="1">
    <location>
        <position position="162"/>
    </location>
    <ligand>
        <name>Mg(2+)</name>
        <dbReference type="ChEBI" id="CHEBI:18420"/>
    </ligand>
</feature>
<feature type="binding site" evidence="1">
    <location>
        <position position="195"/>
    </location>
    <ligand>
        <name>ATP</name>
        <dbReference type="ChEBI" id="CHEBI:30616"/>
    </ligand>
</feature>
<feature type="binding site" evidence="1">
    <location>
        <begin position="221"/>
        <end position="224"/>
    </location>
    <ligand>
        <name>ATP</name>
        <dbReference type="ChEBI" id="CHEBI:30616"/>
    </ligand>
</feature>
<feature type="binding site" evidence="1">
    <location>
        <position position="231"/>
    </location>
    <ligand>
        <name>ATP</name>
        <dbReference type="ChEBI" id="CHEBI:30616"/>
    </ligand>
</feature>
<feature type="binding site" evidence="1">
    <location>
        <position position="233"/>
    </location>
    <ligand>
        <name>substrate</name>
    </ligand>
</feature>
<proteinExistence type="inferred from homology"/>
<gene>
    <name evidence="1" type="primary">pdxK</name>
    <name type="ordered locus">ECUMN_2740</name>
</gene>
<evidence type="ECO:0000255" key="1">
    <source>
        <dbReference type="HAMAP-Rule" id="MF_01638"/>
    </source>
</evidence>
<protein>
    <recommendedName>
        <fullName evidence="1">Pyridoxine/pyridoxal/pyridoxamine kinase</fullName>
        <shortName evidence="1">PN/PL/PM kinase</shortName>
        <ecNumber evidence="1">2.7.1.35</ecNumber>
    </recommendedName>
    <alternativeName>
        <fullName evidence="1">B6-vitamer kinase</fullName>
    </alternativeName>
</protein>
<reference key="1">
    <citation type="journal article" date="2009" name="PLoS Genet.">
        <title>Organised genome dynamics in the Escherichia coli species results in highly diverse adaptive paths.</title>
        <authorList>
            <person name="Touchon M."/>
            <person name="Hoede C."/>
            <person name="Tenaillon O."/>
            <person name="Barbe V."/>
            <person name="Baeriswyl S."/>
            <person name="Bidet P."/>
            <person name="Bingen E."/>
            <person name="Bonacorsi S."/>
            <person name="Bouchier C."/>
            <person name="Bouvet O."/>
            <person name="Calteau A."/>
            <person name="Chiapello H."/>
            <person name="Clermont O."/>
            <person name="Cruveiller S."/>
            <person name="Danchin A."/>
            <person name="Diard M."/>
            <person name="Dossat C."/>
            <person name="Karoui M.E."/>
            <person name="Frapy E."/>
            <person name="Garry L."/>
            <person name="Ghigo J.M."/>
            <person name="Gilles A.M."/>
            <person name="Johnson J."/>
            <person name="Le Bouguenec C."/>
            <person name="Lescat M."/>
            <person name="Mangenot S."/>
            <person name="Martinez-Jehanne V."/>
            <person name="Matic I."/>
            <person name="Nassif X."/>
            <person name="Oztas S."/>
            <person name="Petit M.A."/>
            <person name="Pichon C."/>
            <person name="Rouy Z."/>
            <person name="Ruf C.S."/>
            <person name="Schneider D."/>
            <person name="Tourret J."/>
            <person name="Vacherie B."/>
            <person name="Vallenet D."/>
            <person name="Medigue C."/>
            <person name="Rocha E.P.C."/>
            <person name="Denamur E."/>
        </authorList>
    </citation>
    <scope>NUCLEOTIDE SEQUENCE [LARGE SCALE GENOMIC DNA]</scope>
    <source>
        <strain>UMN026 / ExPEC</strain>
    </source>
</reference>
<dbReference type="EC" id="2.7.1.35" evidence="1"/>
<dbReference type="EMBL" id="CU928163">
    <property type="protein sequence ID" value="CAR13918.1"/>
    <property type="molecule type" value="Genomic_DNA"/>
</dbReference>
<dbReference type="RefSeq" id="WP_000096669.1">
    <property type="nucleotide sequence ID" value="NC_011751.1"/>
</dbReference>
<dbReference type="RefSeq" id="YP_002413445.1">
    <property type="nucleotide sequence ID" value="NC_011751.1"/>
</dbReference>
<dbReference type="SMR" id="B7N609"/>
<dbReference type="STRING" id="585056.ECUMN_2740"/>
<dbReference type="KEGG" id="eum:ECUMN_2740"/>
<dbReference type="PATRIC" id="fig|585056.7.peg.2921"/>
<dbReference type="HOGENOM" id="CLU_046496_3_1_6"/>
<dbReference type="UniPathway" id="UPA01068">
    <property type="reaction ID" value="UER00298"/>
</dbReference>
<dbReference type="UniPathway" id="UPA01068">
    <property type="reaction ID" value="UER00299"/>
</dbReference>
<dbReference type="UniPathway" id="UPA01068">
    <property type="reaction ID" value="UER00300"/>
</dbReference>
<dbReference type="Proteomes" id="UP000007097">
    <property type="component" value="Chromosome"/>
</dbReference>
<dbReference type="GO" id="GO:0005829">
    <property type="term" value="C:cytosol"/>
    <property type="evidence" value="ECO:0007669"/>
    <property type="project" value="TreeGrafter"/>
</dbReference>
<dbReference type="GO" id="GO:0005524">
    <property type="term" value="F:ATP binding"/>
    <property type="evidence" value="ECO:0007669"/>
    <property type="project" value="UniProtKB-UniRule"/>
</dbReference>
<dbReference type="GO" id="GO:0008902">
    <property type="term" value="F:hydroxymethylpyrimidine kinase activity"/>
    <property type="evidence" value="ECO:0007669"/>
    <property type="project" value="TreeGrafter"/>
</dbReference>
<dbReference type="GO" id="GO:0000287">
    <property type="term" value="F:magnesium ion binding"/>
    <property type="evidence" value="ECO:0007669"/>
    <property type="project" value="UniProtKB-UniRule"/>
</dbReference>
<dbReference type="GO" id="GO:0008478">
    <property type="term" value="F:pyridoxal kinase activity"/>
    <property type="evidence" value="ECO:0007669"/>
    <property type="project" value="UniProtKB-UniRule"/>
</dbReference>
<dbReference type="GO" id="GO:0008270">
    <property type="term" value="F:zinc ion binding"/>
    <property type="evidence" value="ECO:0007669"/>
    <property type="project" value="UniProtKB-UniRule"/>
</dbReference>
<dbReference type="GO" id="GO:0009443">
    <property type="term" value="P:pyridoxal 5'-phosphate salvage"/>
    <property type="evidence" value="ECO:0007669"/>
    <property type="project" value="UniProtKB-UniRule"/>
</dbReference>
<dbReference type="CDD" id="cd01173">
    <property type="entry name" value="pyridoxal_pyridoxamine_kinase"/>
    <property type="match status" value="1"/>
</dbReference>
<dbReference type="FunFam" id="3.40.1190.20:FF:000009">
    <property type="entry name" value="Pyridoxine/pyridoxal/pyridoxamine kinase"/>
    <property type="match status" value="1"/>
</dbReference>
<dbReference type="Gene3D" id="3.40.1190.20">
    <property type="match status" value="1"/>
</dbReference>
<dbReference type="HAMAP" id="MF_01638">
    <property type="entry name" value="PdxK"/>
    <property type="match status" value="1"/>
</dbReference>
<dbReference type="InterPro" id="IPR023479">
    <property type="entry name" value="PdxK"/>
</dbReference>
<dbReference type="InterPro" id="IPR013749">
    <property type="entry name" value="PM/HMP-P_kinase-1"/>
</dbReference>
<dbReference type="InterPro" id="IPR004625">
    <property type="entry name" value="PyrdxlKinase"/>
</dbReference>
<dbReference type="InterPro" id="IPR029056">
    <property type="entry name" value="Ribokinase-like"/>
</dbReference>
<dbReference type="NCBIfam" id="NF006034">
    <property type="entry name" value="PRK08176.1"/>
    <property type="match status" value="1"/>
</dbReference>
<dbReference type="NCBIfam" id="TIGR00687">
    <property type="entry name" value="pyridox_kin"/>
    <property type="match status" value="1"/>
</dbReference>
<dbReference type="PANTHER" id="PTHR10534">
    <property type="entry name" value="PYRIDOXAL KINASE"/>
    <property type="match status" value="1"/>
</dbReference>
<dbReference type="PANTHER" id="PTHR10534:SF15">
    <property type="entry name" value="PYRIDOXINE_PYRIDOXAL_PYRIDOXAMINE KINASE"/>
    <property type="match status" value="1"/>
</dbReference>
<dbReference type="Pfam" id="PF08543">
    <property type="entry name" value="Phos_pyr_kin"/>
    <property type="match status" value="1"/>
</dbReference>
<dbReference type="SUPFAM" id="SSF53613">
    <property type="entry name" value="Ribokinase-like"/>
    <property type="match status" value="1"/>
</dbReference>
<organism>
    <name type="scientific">Escherichia coli O17:K52:H18 (strain UMN026 / ExPEC)</name>
    <dbReference type="NCBI Taxonomy" id="585056"/>
    <lineage>
        <taxon>Bacteria</taxon>
        <taxon>Pseudomonadati</taxon>
        <taxon>Pseudomonadota</taxon>
        <taxon>Gammaproteobacteria</taxon>
        <taxon>Enterobacterales</taxon>
        <taxon>Enterobacteriaceae</taxon>
        <taxon>Escherichia</taxon>
    </lineage>
</organism>
<comment type="function">
    <text evidence="1">B6-vitamer kinase involved in the salvage pathway of pyridoxal 5'-phosphate (PLP). Catalyzes the phosphorylation of pyridoxine (PN), pyridoxal (PL), and pyridoxamine (PM), forming their respective 5'-phosphorylated esters, i.e. PNP, PLP and PMP.</text>
</comment>
<comment type="catalytic activity">
    <reaction evidence="1">
        <text>pyridoxal + ATP = pyridoxal 5'-phosphate + ADP + H(+)</text>
        <dbReference type="Rhea" id="RHEA:10224"/>
        <dbReference type="ChEBI" id="CHEBI:15378"/>
        <dbReference type="ChEBI" id="CHEBI:17310"/>
        <dbReference type="ChEBI" id="CHEBI:30616"/>
        <dbReference type="ChEBI" id="CHEBI:456216"/>
        <dbReference type="ChEBI" id="CHEBI:597326"/>
        <dbReference type="EC" id="2.7.1.35"/>
    </reaction>
</comment>
<comment type="catalytic activity">
    <reaction evidence="1">
        <text>pyridoxine + ATP = pyridoxine 5'-phosphate + ADP + H(+)</text>
        <dbReference type="Rhea" id="RHEA:25108"/>
        <dbReference type="ChEBI" id="CHEBI:15378"/>
        <dbReference type="ChEBI" id="CHEBI:16709"/>
        <dbReference type="ChEBI" id="CHEBI:30616"/>
        <dbReference type="ChEBI" id="CHEBI:58589"/>
        <dbReference type="ChEBI" id="CHEBI:456216"/>
        <dbReference type="EC" id="2.7.1.35"/>
    </reaction>
</comment>
<comment type="catalytic activity">
    <reaction evidence="1">
        <text>pyridoxamine + ATP = pyridoxamine 5'-phosphate + ADP + H(+)</text>
        <dbReference type="Rhea" id="RHEA:25104"/>
        <dbReference type="ChEBI" id="CHEBI:15378"/>
        <dbReference type="ChEBI" id="CHEBI:30616"/>
        <dbReference type="ChEBI" id="CHEBI:57761"/>
        <dbReference type="ChEBI" id="CHEBI:58451"/>
        <dbReference type="ChEBI" id="CHEBI:456216"/>
        <dbReference type="EC" id="2.7.1.35"/>
    </reaction>
</comment>
<comment type="cofactor">
    <cofactor evidence="1">
        <name>Mg(2+)</name>
        <dbReference type="ChEBI" id="CHEBI:18420"/>
    </cofactor>
</comment>
<comment type="pathway">
    <text evidence="1">Cofactor metabolism; pyridoxal 5'-phosphate salvage; pyridoxal 5'-phosphate from pyridoxal: step 1/1.</text>
</comment>
<comment type="pathway">
    <text evidence="1">Cofactor metabolism; pyridoxal 5'-phosphate salvage; pyridoxine 5'-phosphate from pyridoxine: step 1/1.</text>
</comment>
<comment type="pathway">
    <text evidence="1">Cofactor metabolism; pyridoxal 5'-phosphate salvage; pyridoxamine 5'-phosphate from pyridoxamine: step 1/1.</text>
</comment>
<comment type="subunit">
    <text evidence="1">Homodimer.</text>
</comment>
<comment type="similarity">
    <text evidence="1">Belongs to the pyridoxine kinase family. PdxK subfamily.</text>
</comment>
<sequence>MSSLLLFNDKSRALQADIVAVQSQVVYGSVGNSIAVPAIKQNGLNVFAVPTVLLSNTPHYDTFYGGAIPDEWFSGYLRALQERDALRQLRAVTTGYMGTASQIKILAEWLTALRKDHPDLLIMVDPVIGDIDSGIYVKPDLPEAYRQYLLPLAQGITPNIFELEILTGKNCRDLDSAIAAAKSLLSDTLKWVVITSASGNEENQEMQVVVVTADSVNVISHSRVKTDLKGTGDLFCAQLISGLLKGKALNDAVHRAGLRVLEVMRYTQQHESDELILPPLAEA</sequence>
<accession>B7N609</accession>